<comment type="function">
    <text evidence="3">Involved in plant defense response.</text>
</comment>
<comment type="subunit">
    <text evidence="3">Interacts with HIR1.</text>
</comment>
<comment type="induction">
    <text evidence="2">Up-regulated by methyl jasmonate.</text>
</comment>
<organism evidence="6">
    <name type="scientific">Arabidopsis thaliana</name>
    <name type="common">Mouse-ear cress</name>
    <dbReference type="NCBI Taxonomy" id="3702"/>
    <lineage>
        <taxon>Eukaryota</taxon>
        <taxon>Viridiplantae</taxon>
        <taxon>Streptophyta</taxon>
        <taxon>Embryophyta</taxon>
        <taxon>Tracheophyta</taxon>
        <taxon>Spermatophyta</taxon>
        <taxon>Magnoliopsida</taxon>
        <taxon>eudicotyledons</taxon>
        <taxon>Gunneridae</taxon>
        <taxon>Pentapetalae</taxon>
        <taxon>rosids</taxon>
        <taxon>malvids</taxon>
        <taxon>Brassicales</taxon>
        <taxon>Brassicaceae</taxon>
        <taxon>Camelineae</taxon>
        <taxon>Arabidopsis</taxon>
    </lineage>
</organism>
<name>LRR1_ARATH</name>
<gene>
    <name evidence="4" type="primary">LRR1</name>
    <name evidence="5" type="ordered locus">At5g21090</name>
    <name evidence="6" type="ORF">T10F18.120</name>
</gene>
<accession>Q9FPJ5</accession>
<evidence type="ECO:0000255" key="1"/>
<evidence type="ECO:0000269" key="2">
    <source>
    </source>
</evidence>
<evidence type="ECO:0000269" key="3">
    <source>
    </source>
</evidence>
<evidence type="ECO:0000303" key="4">
    <source>
    </source>
</evidence>
<evidence type="ECO:0000312" key="5">
    <source>
        <dbReference type="Araport" id="AT5G21090"/>
    </source>
</evidence>
<evidence type="ECO:0000312" key="6">
    <source>
        <dbReference type="EMBL" id="AAG40341.1"/>
    </source>
</evidence>
<dbReference type="EMBL" id="AC140977">
    <property type="protein sequence ID" value="AAO73897.1"/>
    <property type="molecule type" value="Genomic_DNA"/>
</dbReference>
<dbReference type="EMBL" id="CP002688">
    <property type="protein sequence ID" value="AED92930.1"/>
    <property type="molecule type" value="Genomic_DNA"/>
</dbReference>
<dbReference type="EMBL" id="AF324989">
    <property type="protein sequence ID" value="AAG40341.1"/>
    <property type="molecule type" value="mRNA"/>
</dbReference>
<dbReference type="EMBL" id="AF370543">
    <property type="protein sequence ID" value="AAK48970.1"/>
    <property type="molecule type" value="mRNA"/>
</dbReference>
<dbReference type="EMBL" id="AY081542">
    <property type="protein sequence ID" value="AAM10104.1"/>
    <property type="molecule type" value="mRNA"/>
</dbReference>
<dbReference type="EMBL" id="BT002517">
    <property type="protein sequence ID" value="AAO00877.1"/>
    <property type="molecule type" value="mRNA"/>
</dbReference>
<dbReference type="EMBL" id="BT006268">
    <property type="protein sequence ID" value="AAP13376.1"/>
    <property type="molecule type" value="mRNA"/>
</dbReference>
<dbReference type="EMBL" id="AK317417">
    <property type="protein sequence ID" value="BAH20085.1"/>
    <property type="molecule type" value="mRNA"/>
</dbReference>
<dbReference type="RefSeq" id="NP_197608.1">
    <property type="nucleotide sequence ID" value="NM_122117.4"/>
</dbReference>
<dbReference type="SMR" id="Q9FPJ5"/>
<dbReference type="FunCoup" id="Q9FPJ5">
    <property type="interactions" value="1923"/>
</dbReference>
<dbReference type="STRING" id="3702.Q9FPJ5"/>
<dbReference type="PaxDb" id="3702-AT5G21090.1"/>
<dbReference type="ProteomicsDB" id="238674"/>
<dbReference type="EnsemblPlants" id="AT5G21090.1">
    <property type="protein sequence ID" value="AT5G21090.1"/>
    <property type="gene ID" value="AT5G21090"/>
</dbReference>
<dbReference type="GeneID" id="832233"/>
<dbReference type="Gramene" id="AT5G21090.1">
    <property type="protein sequence ID" value="AT5G21090.1"/>
    <property type="gene ID" value="AT5G21090"/>
</dbReference>
<dbReference type="KEGG" id="ath:AT5G21090"/>
<dbReference type="Araport" id="AT5G21090"/>
<dbReference type="TAIR" id="AT5G21090"/>
<dbReference type="eggNOG" id="KOG0619">
    <property type="taxonomic scope" value="Eukaryota"/>
</dbReference>
<dbReference type="HOGENOM" id="CLU_000288_18_9_1"/>
<dbReference type="InParanoid" id="Q9FPJ5"/>
<dbReference type="OMA" id="TIPCELG"/>
<dbReference type="PhylomeDB" id="Q9FPJ5"/>
<dbReference type="PRO" id="PR:Q9FPJ5"/>
<dbReference type="Proteomes" id="UP000006548">
    <property type="component" value="Chromosome 5"/>
</dbReference>
<dbReference type="ExpressionAtlas" id="Q9FPJ5">
    <property type="expression patterns" value="baseline and differential"/>
</dbReference>
<dbReference type="GO" id="GO:0006952">
    <property type="term" value="P:defense response"/>
    <property type="evidence" value="ECO:0007669"/>
    <property type="project" value="UniProtKB-KW"/>
</dbReference>
<dbReference type="GO" id="GO:0007165">
    <property type="term" value="P:signal transduction"/>
    <property type="evidence" value="ECO:0000305"/>
    <property type="project" value="TAIR"/>
</dbReference>
<dbReference type="FunFam" id="3.80.10.10:FF:000024">
    <property type="entry name" value="Somatic embryogenesis receptor kinase 1"/>
    <property type="match status" value="1"/>
</dbReference>
<dbReference type="Gene3D" id="3.80.10.10">
    <property type="entry name" value="Ribonuclease Inhibitor"/>
    <property type="match status" value="1"/>
</dbReference>
<dbReference type="InterPro" id="IPR032675">
    <property type="entry name" value="LRR_dom_sf"/>
</dbReference>
<dbReference type="InterPro" id="IPR013210">
    <property type="entry name" value="LRR_N_plant-typ"/>
</dbReference>
<dbReference type="InterPro" id="IPR055414">
    <property type="entry name" value="LRR_R13L4/SHOC2-like"/>
</dbReference>
<dbReference type="PANTHER" id="PTHR47988">
    <property type="entry name" value="SOMATIC EMBRYOGENESIS RECEPTOR KINASE 1"/>
    <property type="match status" value="1"/>
</dbReference>
<dbReference type="Pfam" id="PF23598">
    <property type="entry name" value="LRR_14"/>
    <property type="match status" value="1"/>
</dbReference>
<dbReference type="Pfam" id="PF08263">
    <property type="entry name" value="LRRNT_2"/>
    <property type="match status" value="1"/>
</dbReference>
<dbReference type="SUPFAM" id="SSF52058">
    <property type="entry name" value="L domain-like"/>
    <property type="match status" value="1"/>
</dbReference>
<reference key="1">
    <citation type="journal article" date="2000" name="Nature">
        <title>Sequence and analysis of chromosome 5 of the plant Arabidopsis thaliana.</title>
        <authorList>
            <person name="Tabata S."/>
            <person name="Kaneko T."/>
            <person name="Nakamura Y."/>
            <person name="Kotani H."/>
            <person name="Kato T."/>
            <person name="Asamizu E."/>
            <person name="Miyajima N."/>
            <person name="Sasamoto S."/>
            <person name="Kimura T."/>
            <person name="Hosouchi T."/>
            <person name="Kawashima K."/>
            <person name="Kohara M."/>
            <person name="Matsumoto M."/>
            <person name="Matsuno A."/>
            <person name="Muraki A."/>
            <person name="Nakayama S."/>
            <person name="Nakazaki N."/>
            <person name="Naruo K."/>
            <person name="Okumura S."/>
            <person name="Shinpo S."/>
            <person name="Takeuchi C."/>
            <person name="Wada T."/>
            <person name="Watanabe A."/>
            <person name="Yamada M."/>
            <person name="Yasuda M."/>
            <person name="Sato S."/>
            <person name="de la Bastide M."/>
            <person name="Huang E."/>
            <person name="Spiegel L."/>
            <person name="Gnoj L."/>
            <person name="O'Shaughnessy A."/>
            <person name="Preston R."/>
            <person name="Habermann K."/>
            <person name="Murray J."/>
            <person name="Johnson D."/>
            <person name="Rohlfing T."/>
            <person name="Nelson J."/>
            <person name="Stoneking T."/>
            <person name="Pepin K."/>
            <person name="Spieth J."/>
            <person name="Sekhon M."/>
            <person name="Armstrong J."/>
            <person name="Becker M."/>
            <person name="Belter E."/>
            <person name="Cordum H."/>
            <person name="Cordes M."/>
            <person name="Courtney L."/>
            <person name="Courtney W."/>
            <person name="Dante M."/>
            <person name="Du H."/>
            <person name="Edwards J."/>
            <person name="Fryman J."/>
            <person name="Haakensen B."/>
            <person name="Lamar E."/>
            <person name="Latreille P."/>
            <person name="Leonard S."/>
            <person name="Meyer R."/>
            <person name="Mulvaney E."/>
            <person name="Ozersky P."/>
            <person name="Riley A."/>
            <person name="Strowmatt C."/>
            <person name="Wagner-McPherson C."/>
            <person name="Wollam A."/>
            <person name="Yoakum M."/>
            <person name="Bell M."/>
            <person name="Dedhia N."/>
            <person name="Parnell L."/>
            <person name="Shah R."/>
            <person name="Rodriguez M."/>
            <person name="Hoon See L."/>
            <person name="Vil D."/>
            <person name="Baker J."/>
            <person name="Kirchoff K."/>
            <person name="Toth K."/>
            <person name="King L."/>
            <person name="Bahret A."/>
            <person name="Miller B."/>
            <person name="Marra M.A."/>
            <person name="Martienssen R."/>
            <person name="McCombie W.R."/>
            <person name="Wilson R.K."/>
            <person name="Murphy G."/>
            <person name="Bancroft I."/>
            <person name="Volckaert G."/>
            <person name="Wambutt R."/>
            <person name="Duesterhoeft A."/>
            <person name="Stiekema W."/>
            <person name="Pohl T."/>
            <person name="Entian K.-D."/>
            <person name="Terryn N."/>
            <person name="Hartley N."/>
            <person name="Bent E."/>
            <person name="Johnson S."/>
            <person name="Langham S.-A."/>
            <person name="McCullagh B."/>
            <person name="Robben J."/>
            <person name="Grymonprez B."/>
            <person name="Zimmermann W."/>
            <person name="Ramsperger U."/>
            <person name="Wedler H."/>
            <person name="Balke K."/>
            <person name="Wedler E."/>
            <person name="Peters S."/>
            <person name="van Staveren M."/>
            <person name="Dirkse W."/>
            <person name="Mooijman P."/>
            <person name="Klein Lankhorst R."/>
            <person name="Weitzenegger T."/>
            <person name="Bothe G."/>
            <person name="Rose M."/>
            <person name="Hauf J."/>
            <person name="Berneiser S."/>
            <person name="Hempel S."/>
            <person name="Feldpausch M."/>
            <person name="Lamberth S."/>
            <person name="Villarroel R."/>
            <person name="Gielen J."/>
            <person name="Ardiles W."/>
            <person name="Bents O."/>
            <person name="Lemcke K."/>
            <person name="Kolesov G."/>
            <person name="Mayer K.F.X."/>
            <person name="Rudd S."/>
            <person name="Schoof H."/>
            <person name="Schueller C."/>
            <person name="Zaccaria P."/>
            <person name="Mewes H.-W."/>
            <person name="Bevan M."/>
            <person name="Fransz P.F."/>
        </authorList>
    </citation>
    <scope>NUCLEOTIDE SEQUENCE [LARGE SCALE GENOMIC DNA]</scope>
    <source>
        <strain>cv. Columbia</strain>
    </source>
</reference>
<reference key="2">
    <citation type="journal article" date="2017" name="Plant J.">
        <title>Araport11: a complete reannotation of the Arabidopsis thaliana reference genome.</title>
        <authorList>
            <person name="Cheng C.Y."/>
            <person name="Krishnakumar V."/>
            <person name="Chan A.P."/>
            <person name="Thibaud-Nissen F."/>
            <person name="Schobel S."/>
            <person name="Town C.D."/>
        </authorList>
    </citation>
    <scope>GENOME REANNOTATION</scope>
    <source>
        <strain>cv. Columbia</strain>
    </source>
</reference>
<reference key="3">
    <citation type="journal article" date="2003" name="Science">
        <title>Empirical analysis of transcriptional activity in the Arabidopsis genome.</title>
        <authorList>
            <person name="Yamada K."/>
            <person name="Lim J."/>
            <person name="Dale J.M."/>
            <person name="Chen H."/>
            <person name="Shinn P."/>
            <person name="Palm C.J."/>
            <person name="Southwick A.M."/>
            <person name="Wu H.C."/>
            <person name="Kim C.J."/>
            <person name="Nguyen M."/>
            <person name="Pham P.K."/>
            <person name="Cheuk R.F."/>
            <person name="Karlin-Newmann G."/>
            <person name="Liu S.X."/>
            <person name="Lam B."/>
            <person name="Sakano H."/>
            <person name="Wu T."/>
            <person name="Yu G."/>
            <person name="Miranda M."/>
            <person name="Quach H.L."/>
            <person name="Tripp M."/>
            <person name="Chang C.H."/>
            <person name="Lee J.M."/>
            <person name="Toriumi M.J."/>
            <person name="Chan M.M."/>
            <person name="Tang C.C."/>
            <person name="Onodera C.S."/>
            <person name="Deng J.M."/>
            <person name="Akiyama K."/>
            <person name="Ansari Y."/>
            <person name="Arakawa T."/>
            <person name="Banh J."/>
            <person name="Banno F."/>
            <person name="Bowser L."/>
            <person name="Brooks S.Y."/>
            <person name="Carninci P."/>
            <person name="Chao Q."/>
            <person name="Choy N."/>
            <person name="Enju A."/>
            <person name="Goldsmith A.D."/>
            <person name="Gurjal M."/>
            <person name="Hansen N.F."/>
            <person name="Hayashizaki Y."/>
            <person name="Johnson-Hopson C."/>
            <person name="Hsuan V.W."/>
            <person name="Iida K."/>
            <person name="Karnes M."/>
            <person name="Khan S."/>
            <person name="Koesema E."/>
            <person name="Ishida J."/>
            <person name="Jiang P.X."/>
            <person name="Jones T."/>
            <person name="Kawai J."/>
            <person name="Kamiya A."/>
            <person name="Meyers C."/>
            <person name="Nakajima M."/>
            <person name="Narusaka M."/>
            <person name="Seki M."/>
            <person name="Sakurai T."/>
            <person name="Satou M."/>
            <person name="Tamse R."/>
            <person name="Vaysberg M."/>
            <person name="Wallender E.K."/>
            <person name="Wong C."/>
            <person name="Yamamura Y."/>
            <person name="Yuan S."/>
            <person name="Shinozaki K."/>
            <person name="Davis R.W."/>
            <person name="Theologis A."/>
            <person name="Ecker J.R."/>
        </authorList>
    </citation>
    <scope>NUCLEOTIDE SEQUENCE [LARGE SCALE MRNA]</scope>
    <source>
        <strain>cv. Columbia</strain>
    </source>
</reference>
<reference key="4">
    <citation type="journal article" date="2009" name="DNA Res.">
        <title>Analysis of multiple occurrences of alternative splicing events in Arabidopsis thaliana using novel sequenced full-length cDNAs.</title>
        <authorList>
            <person name="Iida K."/>
            <person name="Fukami-Kobayashi K."/>
            <person name="Toyoda A."/>
            <person name="Sakaki Y."/>
            <person name="Kobayashi M."/>
            <person name="Seki M."/>
            <person name="Shinozaki K."/>
        </authorList>
    </citation>
    <scope>NUCLEOTIDE SEQUENCE [LARGE SCALE MRNA]</scope>
    <source>
        <strain>cv. Columbia</strain>
    </source>
</reference>
<reference key="5">
    <citation type="journal article" date="2006" name="Plant J.">
        <title>WRKY70 modulates the selection of signaling pathways in plant defense.</title>
        <authorList>
            <person name="Li J."/>
            <person name="Brader G."/>
            <person name="Kariola T."/>
            <person name="Palva E.T."/>
        </authorList>
    </citation>
    <scope>INDUCTION BY METHYL JASMONATE</scope>
</reference>
<reference key="6">
    <citation type="journal article" date="2009" name="Plant Cell Environ.">
        <title>A novel simple extracellular leucine-rich repeat (eLRR) domain protein from rice (OsLRR1) enters the endosomal pathway and interacts with the hypersensitive-induced reaction protein 1 (OsHIR1).</title>
        <authorList>
            <person name="Zhou L."/>
            <person name="Cheung M.Y."/>
            <person name="Zhang Q."/>
            <person name="Lei C.L."/>
            <person name="Zhang S.H."/>
            <person name="Sun S.S."/>
            <person name="Lam H.M."/>
        </authorList>
    </citation>
    <scope>IDENTIFICATION</scope>
    <scope>FUNCTION</scope>
    <scope>INTERACTION WITH HIR1</scope>
</reference>
<protein>
    <recommendedName>
        <fullName evidence="4">Leucine-rich repeat protein 1</fullName>
        <shortName evidence="4">AtLRR1</shortName>
    </recommendedName>
</protein>
<keyword id="KW-0433">Leucine-rich repeat</keyword>
<keyword id="KW-0611">Plant defense</keyword>
<keyword id="KW-1185">Reference proteome</keyword>
<keyword id="KW-0677">Repeat</keyword>
<keyword id="KW-0732">Signal</keyword>
<proteinExistence type="evidence at protein level"/>
<sequence>MASRNYRWELFAASLTLTLALIHLVEANSEGDALYALRRSLTDPDHVLQSWDPTLVNPCTWFHVTCNQDNRVTRVDLGNSNLSGHLAPELGKLEHLQYLELYKNNIQGTIPSELGNLKNLISLDLYNNNLTGIVPTSLGKLKSLVFLRLNDNRLTGPIPRALTAIPSLKVVDVSSNDLCGTIPTNGPFAHIPLQNFENNPRLEGPELLGLASYDTNCT</sequence>
<feature type="signal peptide" evidence="1">
    <location>
        <begin position="1"/>
        <end position="27"/>
    </location>
</feature>
<feature type="chain" id="PRO_5009348379" description="Leucine-rich repeat protein 1" evidence="1">
    <location>
        <begin position="28"/>
        <end position="218"/>
    </location>
</feature>
<feature type="repeat" description="LRR 1" evidence="1">
    <location>
        <begin position="94"/>
        <end position="117"/>
    </location>
</feature>
<feature type="repeat" description="LRR 2" evidence="1">
    <location>
        <begin position="119"/>
        <end position="140"/>
    </location>
</feature>
<feature type="repeat" description="LRR 3" evidence="1">
    <location>
        <begin position="141"/>
        <end position="165"/>
    </location>
</feature>
<feature type="repeat" description="LRR 4" evidence="1">
    <location>
        <begin position="167"/>
        <end position="190"/>
    </location>
</feature>